<reference key="1">
    <citation type="journal article" date="2010" name="J. Bacteriol.">
        <title>Whole genome sequences of two Xylella fastidiosa strains (M12 and M23) causing almond leaf scorch disease in California.</title>
        <authorList>
            <person name="Chen J."/>
            <person name="Xie G."/>
            <person name="Han S."/>
            <person name="Chertkov O."/>
            <person name="Sims D."/>
            <person name="Civerolo E.L."/>
        </authorList>
    </citation>
    <scope>NUCLEOTIDE SEQUENCE [LARGE SCALE GENOMIC DNA]</scope>
    <source>
        <strain>M23</strain>
    </source>
</reference>
<gene>
    <name evidence="1" type="primary">purC</name>
    <name type="ordered locus">XfasM23_0154</name>
</gene>
<feature type="chain" id="PRO_1000096029" description="Phosphoribosylaminoimidazole-succinocarboxamide synthase">
    <location>
        <begin position="1"/>
        <end position="308"/>
    </location>
</feature>
<organism>
    <name type="scientific">Xylella fastidiosa (strain M23)</name>
    <dbReference type="NCBI Taxonomy" id="405441"/>
    <lineage>
        <taxon>Bacteria</taxon>
        <taxon>Pseudomonadati</taxon>
        <taxon>Pseudomonadota</taxon>
        <taxon>Gammaproteobacteria</taxon>
        <taxon>Lysobacterales</taxon>
        <taxon>Lysobacteraceae</taxon>
        <taxon>Xylella</taxon>
    </lineage>
</organism>
<comment type="catalytic activity">
    <reaction evidence="1">
        <text>5-amino-1-(5-phospho-D-ribosyl)imidazole-4-carboxylate + L-aspartate + ATP = (2S)-2-[5-amino-1-(5-phospho-beta-D-ribosyl)imidazole-4-carboxamido]succinate + ADP + phosphate + 2 H(+)</text>
        <dbReference type="Rhea" id="RHEA:22628"/>
        <dbReference type="ChEBI" id="CHEBI:15378"/>
        <dbReference type="ChEBI" id="CHEBI:29991"/>
        <dbReference type="ChEBI" id="CHEBI:30616"/>
        <dbReference type="ChEBI" id="CHEBI:43474"/>
        <dbReference type="ChEBI" id="CHEBI:58443"/>
        <dbReference type="ChEBI" id="CHEBI:77657"/>
        <dbReference type="ChEBI" id="CHEBI:456216"/>
        <dbReference type="EC" id="6.3.2.6"/>
    </reaction>
</comment>
<comment type="pathway">
    <text evidence="1">Purine metabolism; IMP biosynthesis via de novo pathway; 5-amino-1-(5-phospho-D-ribosyl)imidazole-4-carboxamide from 5-amino-1-(5-phospho-D-ribosyl)imidazole-4-carboxylate: step 1/2.</text>
</comment>
<comment type="similarity">
    <text evidence="1">Belongs to the SAICAR synthetase family.</text>
</comment>
<keyword id="KW-0067">ATP-binding</keyword>
<keyword id="KW-0436">Ligase</keyword>
<keyword id="KW-0547">Nucleotide-binding</keyword>
<keyword id="KW-0658">Purine biosynthesis</keyword>
<accession>B2I6R9</accession>
<sequence length="308" mass="34436">MLTTLLQSDLPGLPLRHCGKVRDVFDIPRKRLPVDTRSGEYLLIVATDRLSAFDVVLPDPIPGKGEILCQISNFWFQKTEHLMPNHLTGINVASVLPDGIDKTLYIQRAVVTKKLKPVGIEAIARGYLIGSGWKDYQRTGKVSGIQLPDGLQEAEKLPDPIFTPSTKAAVGHHDENIDFDTTVKMVGAELAERVRDATLRIYHFAAKYAAECGILLADTKLEFGTDIDGRLYVMDEMLTPDSSRYWPIDEYQVGTSPPSYDKQLVRNYLETLDWDKTAPGPTLPQDIIDRTRAKYTEALQRLAGINID</sequence>
<protein>
    <recommendedName>
        <fullName evidence="1">Phosphoribosylaminoimidazole-succinocarboxamide synthase</fullName>
        <ecNumber evidence="1">6.3.2.6</ecNumber>
    </recommendedName>
    <alternativeName>
        <fullName evidence="1">SAICAR synthetase</fullName>
    </alternativeName>
</protein>
<evidence type="ECO:0000255" key="1">
    <source>
        <dbReference type="HAMAP-Rule" id="MF_00137"/>
    </source>
</evidence>
<name>PUR7_XYLF2</name>
<dbReference type="EC" id="6.3.2.6" evidence="1"/>
<dbReference type="EMBL" id="CP001011">
    <property type="protein sequence ID" value="ACB91611.1"/>
    <property type="molecule type" value="Genomic_DNA"/>
</dbReference>
<dbReference type="RefSeq" id="WP_004572982.1">
    <property type="nucleotide sequence ID" value="NC_010577.1"/>
</dbReference>
<dbReference type="SMR" id="B2I6R9"/>
<dbReference type="KEGG" id="xfn:XfasM23_0154"/>
<dbReference type="HOGENOM" id="CLU_045637_0_0_6"/>
<dbReference type="UniPathway" id="UPA00074">
    <property type="reaction ID" value="UER00131"/>
</dbReference>
<dbReference type="Proteomes" id="UP000001698">
    <property type="component" value="Chromosome"/>
</dbReference>
<dbReference type="GO" id="GO:0005737">
    <property type="term" value="C:cytoplasm"/>
    <property type="evidence" value="ECO:0007669"/>
    <property type="project" value="TreeGrafter"/>
</dbReference>
<dbReference type="GO" id="GO:0005524">
    <property type="term" value="F:ATP binding"/>
    <property type="evidence" value="ECO:0007669"/>
    <property type="project" value="UniProtKB-KW"/>
</dbReference>
<dbReference type="GO" id="GO:0004639">
    <property type="term" value="F:phosphoribosylaminoimidazolesuccinocarboxamide synthase activity"/>
    <property type="evidence" value="ECO:0007669"/>
    <property type="project" value="UniProtKB-UniRule"/>
</dbReference>
<dbReference type="GO" id="GO:0006189">
    <property type="term" value="P:'de novo' IMP biosynthetic process"/>
    <property type="evidence" value="ECO:0007669"/>
    <property type="project" value="UniProtKB-UniRule"/>
</dbReference>
<dbReference type="CDD" id="cd01414">
    <property type="entry name" value="SAICAR_synt_Sc"/>
    <property type="match status" value="1"/>
</dbReference>
<dbReference type="FunFam" id="3.30.200.20:FF:000365">
    <property type="entry name" value="Phosphoribosylaminoimidazole-succinocarboxamide synthase"/>
    <property type="match status" value="1"/>
</dbReference>
<dbReference type="FunFam" id="3.30.470.20:FF:000015">
    <property type="entry name" value="Phosphoribosylaminoimidazole-succinocarboxamide synthase"/>
    <property type="match status" value="1"/>
</dbReference>
<dbReference type="Gene3D" id="3.30.470.20">
    <property type="entry name" value="ATP-grasp fold, B domain"/>
    <property type="match status" value="1"/>
</dbReference>
<dbReference type="Gene3D" id="3.30.200.20">
    <property type="entry name" value="Phosphorylase Kinase, domain 1"/>
    <property type="match status" value="1"/>
</dbReference>
<dbReference type="HAMAP" id="MF_00137">
    <property type="entry name" value="SAICAR_synth"/>
    <property type="match status" value="1"/>
</dbReference>
<dbReference type="InterPro" id="IPR028923">
    <property type="entry name" value="SAICAR_synt/ADE2_N"/>
</dbReference>
<dbReference type="InterPro" id="IPR001636">
    <property type="entry name" value="SAICAR_synth"/>
</dbReference>
<dbReference type="InterPro" id="IPR018236">
    <property type="entry name" value="SAICAR_synthetase_CS"/>
</dbReference>
<dbReference type="NCBIfam" id="NF010568">
    <property type="entry name" value="PRK13961.1"/>
    <property type="match status" value="1"/>
</dbReference>
<dbReference type="NCBIfam" id="TIGR00081">
    <property type="entry name" value="purC"/>
    <property type="match status" value="1"/>
</dbReference>
<dbReference type="PANTHER" id="PTHR43700">
    <property type="entry name" value="PHOSPHORIBOSYLAMINOIMIDAZOLE-SUCCINOCARBOXAMIDE SYNTHASE"/>
    <property type="match status" value="1"/>
</dbReference>
<dbReference type="PANTHER" id="PTHR43700:SF1">
    <property type="entry name" value="PHOSPHORIBOSYLAMINOIMIDAZOLE-SUCCINOCARBOXAMIDE SYNTHASE"/>
    <property type="match status" value="1"/>
</dbReference>
<dbReference type="Pfam" id="PF01259">
    <property type="entry name" value="SAICAR_synt"/>
    <property type="match status" value="1"/>
</dbReference>
<dbReference type="SUPFAM" id="SSF56104">
    <property type="entry name" value="SAICAR synthase-like"/>
    <property type="match status" value="1"/>
</dbReference>
<dbReference type="PROSITE" id="PS01057">
    <property type="entry name" value="SAICAR_SYNTHETASE_1"/>
    <property type="match status" value="1"/>
</dbReference>
<dbReference type="PROSITE" id="PS01058">
    <property type="entry name" value="SAICAR_SYNTHETASE_2"/>
    <property type="match status" value="1"/>
</dbReference>
<proteinExistence type="inferred from homology"/>